<reference key="1">
    <citation type="journal article" date="1998" name="Science">
        <title>Genome sequence of the nematode C. elegans: a platform for investigating biology.</title>
        <authorList>
            <consortium name="The C. elegans sequencing consortium"/>
        </authorList>
    </citation>
    <scope>NUCLEOTIDE SEQUENCE [LARGE SCALE GENOMIC DNA]</scope>
    <source>
        <strain>Bristol N2</strain>
    </source>
</reference>
<dbReference type="EMBL" id="FO080489">
    <property type="protein sequence ID" value="CCD64109.1"/>
    <property type="molecule type" value="Genomic_DNA"/>
</dbReference>
<dbReference type="PIR" id="G89134">
    <property type="entry name" value="G89134"/>
</dbReference>
<dbReference type="RefSeq" id="NP_505208.1">
    <property type="nucleotide sequence ID" value="NM_072807.5"/>
</dbReference>
<dbReference type="SMR" id="O16927"/>
<dbReference type="BioGRID" id="44276">
    <property type="interactions" value="4"/>
</dbReference>
<dbReference type="DIP" id="DIP-26264N"/>
<dbReference type="FunCoup" id="O16927">
    <property type="interactions" value="1975"/>
</dbReference>
<dbReference type="STRING" id="6239.F25G6.8.1"/>
<dbReference type="PaxDb" id="6239-F25G6.8"/>
<dbReference type="PeptideAtlas" id="O16927"/>
<dbReference type="EnsemblMetazoa" id="F25G6.8.1">
    <property type="protein sequence ID" value="F25G6.8.1"/>
    <property type="gene ID" value="WBGene00017799"/>
</dbReference>
<dbReference type="GeneID" id="179236"/>
<dbReference type="KEGG" id="cel:CELE_F25G6.8"/>
<dbReference type="UCSC" id="F25G6.8.2">
    <property type="organism name" value="c. elegans"/>
</dbReference>
<dbReference type="AGR" id="WB:WBGene00017799"/>
<dbReference type="CTD" id="179236"/>
<dbReference type="WormBase" id="F25G6.8">
    <property type="protein sequence ID" value="CE09644"/>
    <property type="gene ID" value="WBGene00017799"/>
</dbReference>
<dbReference type="eggNOG" id="KOG1761">
    <property type="taxonomic scope" value="Eukaryota"/>
</dbReference>
<dbReference type="GeneTree" id="ENSGT00390000008496"/>
<dbReference type="HOGENOM" id="CLU_094309_2_1_1"/>
<dbReference type="InParanoid" id="O16927"/>
<dbReference type="OMA" id="EQHIPND"/>
<dbReference type="OrthoDB" id="19209at2759"/>
<dbReference type="PhylomeDB" id="O16927"/>
<dbReference type="Reactome" id="R-CEL-1799339">
    <property type="pathway name" value="SRP-dependent cotranslational protein targeting to membrane"/>
</dbReference>
<dbReference type="Reactome" id="R-CEL-6798695">
    <property type="pathway name" value="Neutrophil degranulation"/>
</dbReference>
<dbReference type="PRO" id="PR:O16927"/>
<dbReference type="Proteomes" id="UP000001940">
    <property type="component" value="Chromosome V"/>
</dbReference>
<dbReference type="Bgee" id="WBGene00017799">
    <property type="expression patterns" value="Expressed in germ line (C elegans) and 4 other cell types or tissues"/>
</dbReference>
<dbReference type="GO" id="GO:0005786">
    <property type="term" value="C:signal recognition particle, endoplasmic reticulum targeting"/>
    <property type="evidence" value="ECO:0000318"/>
    <property type="project" value="GO_Central"/>
</dbReference>
<dbReference type="GO" id="GO:0008312">
    <property type="term" value="F:7S RNA binding"/>
    <property type="evidence" value="ECO:0007669"/>
    <property type="project" value="InterPro"/>
</dbReference>
<dbReference type="GO" id="GO:0030942">
    <property type="term" value="F:endoplasmic reticulum signal peptide binding"/>
    <property type="evidence" value="ECO:0007669"/>
    <property type="project" value="InterPro"/>
</dbReference>
<dbReference type="GO" id="GO:0045047">
    <property type="term" value="P:protein targeting to ER"/>
    <property type="evidence" value="ECO:0000318"/>
    <property type="project" value="GO_Central"/>
</dbReference>
<dbReference type="GO" id="GO:0006614">
    <property type="term" value="P:SRP-dependent cotranslational protein targeting to membrane"/>
    <property type="evidence" value="ECO:0007669"/>
    <property type="project" value="InterPro"/>
</dbReference>
<dbReference type="FunFam" id="3.30.720.10:FF:000011">
    <property type="entry name" value="Signal recognition particle 14 kDa protein"/>
    <property type="match status" value="1"/>
</dbReference>
<dbReference type="Gene3D" id="3.30.720.10">
    <property type="entry name" value="Signal recognition particle alu RNA binding heterodimer, srp9/1"/>
    <property type="match status" value="1"/>
</dbReference>
<dbReference type="InterPro" id="IPR003210">
    <property type="entry name" value="Signal_recog_particle_SRP14"/>
</dbReference>
<dbReference type="InterPro" id="IPR009018">
    <property type="entry name" value="Signal_recog_particle_SRP9/14"/>
</dbReference>
<dbReference type="PANTHER" id="PTHR12013">
    <property type="entry name" value="SIGNAL RECOGNITION PARTICLE 14 KD PROTEIN"/>
    <property type="match status" value="1"/>
</dbReference>
<dbReference type="Pfam" id="PF02290">
    <property type="entry name" value="SRP14"/>
    <property type="match status" value="1"/>
</dbReference>
<dbReference type="SUPFAM" id="SSF54762">
    <property type="entry name" value="Signal recognition particle alu RNA binding heterodimer, SRP9/14"/>
    <property type="match status" value="1"/>
</dbReference>
<protein>
    <recommendedName>
        <fullName>Signal recognition particle 14 kDa protein</fullName>
        <shortName>SRP14</shortName>
    </recommendedName>
</protein>
<organism>
    <name type="scientific">Caenorhabditis elegans</name>
    <dbReference type="NCBI Taxonomy" id="6239"/>
    <lineage>
        <taxon>Eukaryota</taxon>
        <taxon>Metazoa</taxon>
        <taxon>Ecdysozoa</taxon>
        <taxon>Nematoda</taxon>
        <taxon>Chromadorea</taxon>
        <taxon>Rhabditida</taxon>
        <taxon>Rhabditina</taxon>
        <taxon>Rhabditomorpha</taxon>
        <taxon>Rhabditoidea</taxon>
        <taxon>Rhabditidae</taxon>
        <taxon>Peloderinae</taxon>
        <taxon>Caenorhabditis</taxon>
    </lineage>
</organism>
<evidence type="ECO:0000250" key="1">
    <source>
        <dbReference type="UniProtKB" id="P16255"/>
    </source>
</evidence>
<evidence type="ECO:0000250" key="2">
    <source>
        <dbReference type="UniProtKB" id="P37108"/>
    </source>
</evidence>
<evidence type="ECO:0000305" key="3"/>
<feature type="chain" id="PRO_0000135192" description="Signal recognition particle 14 kDa protein">
    <location>
        <begin position="1"/>
        <end position="116"/>
    </location>
</feature>
<keyword id="KW-0963">Cytoplasm</keyword>
<keyword id="KW-1185">Reference proteome</keyword>
<keyword id="KW-0687">Ribonucleoprotein</keyword>
<keyword id="KW-0694">RNA-binding</keyword>
<keyword id="KW-0733">Signal recognition particle</keyword>
<accession>O16927</accession>
<gene>
    <name type="ORF">F25G6.8</name>
</gene>
<name>SRP14_CAEEL</name>
<sequence>MSAVEQHIPNDQFLQKLTAFYRDSKIRGPKSVYVTMKPYDGRTKAMPKGSTFKEGDEISCIFRAKWGSKKIATEVKAKEVNKFHTQYSAIIVAQMVNLEKRKKTDDEKKKTGATKA</sequence>
<proteinExistence type="inferred from homology"/>
<comment type="function">
    <text evidence="2">Component of the signal recognition particle (SRP) complex, a ribonucleoprotein complex that mediates the cotranslational targeting of secretory and membrane proteins to the endoplasmic reticulum (ER) (By similarity). F37F2.2/srpa-19 together with F25G6.8/srpa-14 and the Alu portion of the SRP RNA, constitutes the elongation arrest domain of SRP (By similarity). The complex of F37F2.2/srpa-19 and F25G6.8/srpa-14 is required for SRP RNA binding (By similarity).</text>
</comment>
<comment type="subunit">
    <text evidence="1 2">Heterodimer with ZK512.4/SRP9; binds RNA as heterodimer (By similarity). Component of a signal recognition particle (SRP) complex that consists of a 7SL RNA molecule of 300 nucleotides and six protein subunits: srpa-72, srpa-68, SRP54, F37F2.2/SRP19, F25G6.8/SRP14 and ZK512.4/SRP9 (By similarity).</text>
</comment>
<comment type="subcellular location">
    <subcellularLocation>
        <location>Cytoplasm</location>
    </subcellularLocation>
</comment>
<comment type="similarity">
    <text evidence="3">Belongs to the SRP14 family.</text>
</comment>